<comment type="function">
    <text evidence="1">May modulate protein synthesis.</text>
</comment>
<comment type="subunit">
    <text evidence="1 6">Interacts (via J domain) with HSPA5. Interacts (via cytosolic domain) with ribosomes (By similarity). Interacts (via SANT 2 domain) with SERPINA3; the interaction delays the formation of the covalent inhibitory complex SERPINA3-chymotrypsin, but does not alter the catalytic activity of SERPINA3. Interacts (via SANT 2 domain) with ITIH4 (via C-terminus); the interaction protects ITIH4 against in vitro cleavage by kallikrein.</text>
</comment>
<comment type="interaction">
    <interactant intactId="EBI-296550">
        <id>Q96KC8</id>
    </interactant>
    <interactant intactId="EBI-11522760">
        <id>Q6RW13-2</id>
        <label>AGTRAP</label>
    </interactant>
    <organismsDiffer>false</organismsDiffer>
    <experiments>3</experiments>
</comment>
<comment type="interaction">
    <interactant intactId="EBI-296550">
        <id>Q96KC8</id>
    </interactant>
    <interactant intactId="EBI-721179">
        <id>P27449</id>
        <label>ATP6V0C</label>
    </interactant>
    <organismsDiffer>false</organismsDiffer>
    <experiments>3</experiments>
</comment>
<comment type="interaction">
    <interactant intactId="EBI-296550">
        <id>Q96KC8</id>
    </interactant>
    <interactant intactId="EBI-349854">
        <id>P13569</id>
        <label>CFTR</label>
    </interactant>
    <organismsDiffer>false</organismsDiffer>
    <experiments>7</experiments>
</comment>
<comment type="interaction">
    <interactant intactId="EBI-296550">
        <id>Q96KC8</id>
    </interactant>
    <interactant intactId="EBI-2807956">
        <id>Q96FZ5</id>
        <label>CMTM7</label>
    </interactant>
    <organismsDiffer>false</organismsDiffer>
    <experiments>3</experiments>
</comment>
<comment type="interaction">
    <interactant intactId="EBI-296550">
        <id>Q96KC8</id>
    </interactant>
    <interactant intactId="EBI-1752413">
        <id>P78329</id>
        <label>CYP4F2</label>
    </interactant>
    <organismsDiffer>false</organismsDiffer>
    <experiments>3</experiments>
</comment>
<comment type="interaction">
    <interactant intactId="EBI-296550">
        <id>Q96KC8</id>
    </interactant>
    <interactant intactId="EBI-21591415">
        <id>P13473-2</id>
        <label>LAMP2</label>
    </interactant>
    <organismsDiffer>false</organismsDiffer>
    <experiments>3</experiments>
</comment>
<comment type="interaction">
    <interactant intactId="EBI-296550">
        <id>Q96KC8</id>
    </interactant>
    <interactant intactId="EBI-608347">
        <id>Q04941</id>
        <label>PLP2</label>
    </interactant>
    <organismsDiffer>false</organismsDiffer>
    <experiments>3</experiments>
</comment>
<comment type="interaction">
    <interactant intactId="EBI-296550">
        <id>Q96KC8</id>
    </interactant>
    <interactant intactId="EBI-4401316">
        <id>Q9NWS8</id>
        <label>RMND1</label>
    </interactant>
    <organismsDiffer>false</organismsDiffer>
    <experiments>2</experiments>
</comment>
<comment type="interaction">
    <interactant intactId="EBI-296550">
        <id>Q96KC8</id>
    </interactant>
    <interactant intactId="EBI-296557">
        <id>P01011</id>
        <label>SERPINA3</label>
    </interactant>
    <organismsDiffer>false</organismsDiffer>
    <experiments>3</experiments>
</comment>
<comment type="interaction">
    <interactant intactId="EBI-296550">
        <id>Q96KC8</id>
    </interactant>
    <interactant intactId="EBI-2623095">
        <id>Q9Y371</id>
        <label>SH3GLB1</label>
    </interactant>
    <organismsDiffer>false</organismsDiffer>
    <experiments>3</experiments>
</comment>
<comment type="interaction">
    <interactant intactId="EBI-296550">
        <id>Q96KC8</id>
    </interactant>
    <interactant intactId="EBI-11994282">
        <id>Q5SNT2-2</id>
        <label>TMEM201</label>
    </interactant>
    <organismsDiffer>false</organismsDiffer>
    <experiments>3</experiments>
</comment>
<comment type="interaction">
    <interactant intactId="EBI-296550">
        <id>Q96KC8</id>
    </interactant>
    <interactant intactId="EBI-717441">
        <id>O14798</id>
        <label>TNFRSF10C</label>
    </interactant>
    <organismsDiffer>false</organismsDiffer>
    <experiments>3</experiments>
</comment>
<comment type="subcellular location">
    <subcellularLocation>
        <location evidence="1">Endoplasmic reticulum membrane</location>
        <topology evidence="1">Single-pass type I membrane protein</topology>
    </subcellularLocation>
    <subcellularLocation>
        <location>Nucleus membrane</location>
        <topology>Single-pass type I membrane protein</topology>
    </subcellularLocation>
    <subcellularLocation>
        <location evidence="1">Microsome membrane</location>
        <topology evidence="1">Single-pass type I membrane protein</topology>
    </subcellularLocation>
</comment>
<feature type="signal peptide" evidence="2">
    <location>
        <begin position="1"/>
        <end position="47"/>
    </location>
</feature>
<feature type="chain" id="PRO_0000071042" description="DnaJ homolog subfamily C member 1">
    <location>
        <begin position="48"/>
        <end position="554"/>
    </location>
</feature>
<feature type="topological domain" description="Lumenal" evidence="1">
    <location>
        <begin position="48"/>
        <end position="153"/>
    </location>
</feature>
<feature type="transmembrane region" description="Helical" evidence="2">
    <location>
        <begin position="154"/>
        <end position="174"/>
    </location>
</feature>
<feature type="topological domain" description="Cytoplasmic" evidence="1">
    <location>
        <begin position="175"/>
        <end position="554"/>
    </location>
</feature>
<feature type="domain" description="J" evidence="3">
    <location>
        <begin position="65"/>
        <end position="129"/>
    </location>
</feature>
<feature type="domain" description="SANT 1" evidence="4">
    <location>
        <begin position="325"/>
        <end position="379"/>
    </location>
</feature>
<feature type="domain" description="SANT 2" evidence="4">
    <location>
        <begin position="492"/>
        <end position="547"/>
    </location>
</feature>
<feature type="region of interest" description="Disordered" evidence="5">
    <location>
        <begin position="392"/>
        <end position="500"/>
    </location>
</feature>
<feature type="compositionally biased region" description="Polar residues" evidence="5">
    <location>
        <begin position="392"/>
        <end position="405"/>
    </location>
</feature>
<feature type="compositionally biased region" description="Acidic residues" evidence="5">
    <location>
        <begin position="421"/>
        <end position="432"/>
    </location>
</feature>
<feature type="compositionally biased region" description="Basic and acidic residues" evidence="5">
    <location>
        <begin position="455"/>
        <end position="472"/>
    </location>
</feature>
<feature type="compositionally biased region" description="Acidic residues" evidence="5">
    <location>
        <begin position="473"/>
        <end position="482"/>
    </location>
</feature>
<feature type="compositionally biased region" description="Basic and acidic residues" evidence="5">
    <location>
        <begin position="483"/>
        <end position="494"/>
    </location>
</feature>
<feature type="modified residue" description="Phosphoserine" evidence="7">
    <location>
        <position position="381"/>
    </location>
</feature>
<feature type="modified residue" description="Phosphoserine" evidence="7 8 10">
    <location>
        <position position="430"/>
    </location>
</feature>
<feature type="modified residue" description="Phosphoserine" evidence="9 10 11">
    <location>
        <position position="479"/>
    </location>
</feature>
<feature type="modified residue" description="Phosphoserine" evidence="9 10 11">
    <location>
        <position position="480"/>
    </location>
</feature>
<feature type="modified residue" description="Phosphoserine" evidence="9">
    <location>
        <position position="484"/>
    </location>
</feature>
<feature type="modified residue" description="Phosphoserine" evidence="10">
    <location>
        <position position="492"/>
    </location>
</feature>
<feature type="helix" evidence="12">
    <location>
        <begin position="332"/>
        <end position="344"/>
    </location>
</feature>
<feature type="helix" evidence="12">
    <location>
        <begin position="352"/>
        <end position="360"/>
    </location>
</feature>
<feature type="helix" evidence="12">
    <location>
        <begin position="364"/>
        <end position="376"/>
    </location>
</feature>
<feature type="turn" evidence="13">
    <location>
        <begin position="489"/>
        <end position="491"/>
    </location>
</feature>
<feature type="helix" evidence="13">
    <location>
        <begin position="499"/>
        <end position="511"/>
    </location>
</feature>
<feature type="strand" evidence="13">
    <location>
        <begin position="514"/>
        <end position="516"/>
    </location>
</feature>
<feature type="helix" evidence="13">
    <location>
        <begin position="517"/>
        <end position="523"/>
    </location>
</feature>
<feature type="helix" evidence="13">
    <location>
        <begin position="524"/>
        <end position="526"/>
    </location>
</feature>
<feature type="strand" evidence="13">
    <location>
        <begin position="528"/>
        <end position="530"/>
    </location>
</feature>
<feature type="helix" evidence="13">
    <location>
        <begin position="532"/>
        <end position="543"/>
    </location>
</feature>
<organism>
    <name type="scientific">Homo sapiens</name>
    <name type="common">Human</name>
    <dbReference type="NCBI Taxonomy" id="9606"/>
    <lineage>
        <taxon>Eukaryota</taxon>
        <taxon>Metazoa</taxon>
        <taxon>Chordata</taxon>
        <taxon>Craniata</taxon>
        <taxon>Vertebrata</taxon>
        <taxon>Euteleostomi</taxon>
        <taxon>Mammalia</taxon>
        <taxon>Eutheria</taxon>
        <taxon>Euarchontoglires</taxon>
        <taxon>Primates</taxon>
        <taxon>Haplorrhini</taxon>
        <taxon>Catarrhini</taxon>
        <taxon>Hominidae</taxon>
        <taxon>Homo</taxon>
    </lineage>
</organism>
<name>DNJC1_HUMAN</name>
<reference key="1">
    <citation type="journal article" date="2004" name="J. Biol. Chem.">
        <title>The SANT2 domain of the murine tumor cell DnaJ-like protein 1 human homologue interacts with alpha1-antichymotrypsin and kinetically interferes with its serpin inhibitory activity.</title>
        <authorList>
            <person name="Kroczynska B."/>
            <person name="Evangelista C.M."/>
            <person name="Samant S.S."/>
            <person name="Elguindi E.C."/>
            <person name="Blond S.Y."/>
        </authorList>
    </citation>
    <scope>NUCLEOTIDE SEQUENCE [MRNA]</scope>
    <scope>INTERACTION WITH SERPINA3</scope>
    <source>
        <tissue>Liver</tissue>
    </source>
</reference>
<reference key="2">
    <citation type="journal article" date="2004" name="Nat. Genet.">
        <title>Complete sequencing and characterization of 21,243 full-length human cDNAs.</title>
        <authorList>
            <person name="Ota T."/>
            <person name="Suzuki Y."/>
            <person name="Nishikawa T."/>
            <person name="Otsuki T."/>
            <person name="Sugiyama T."/>
            <person name="Irie R."/>
            <person name="Wakamatsu A."/>
            <person name="Hayashi K."/>
            <person name="Sato H."/>
            <person name="Nagai K."/>
            <person name="Kimura K."/>
            <person name="Makita H."/>
            <person name="Sekine M."/>
            <person name="Obayashi M."/>
            <person name="Nishi T."/>
            <person name="Shibahara T."/>
            <person name="Tanaka T."/>
            <person name="Ishii S."/>
            <person name="Yamamoto J."/>
            <person name="Saito K."/>
            <person name="Kawai Y."/>
            <person name="Isono Y."/>
            <person name="Nakamura Y."/>
            <person name="Nagahari K."/>
            <person name="Murakami K."/>
            <person name="Yasuda T."/>
            <person name="Iwayanagi T."/>
            <person name="Wagatsuma M."/>
            <person name="Shiratori A."/>
            <person name="Sudo H."/>
            <person name="Hosoiri T."/>
            <person name="Kaku Y."/>
            <person name="Kodaira H."/>
            <person name="Kondo H."/>
            <person name="Sugawara M."/>
            <person name="Takahashi M."/>
            <person name="Kanda K."/>
            <person name="Yokoi T."/>
            <person name="Furuya T."/>
            <person name="Kikkawa E."/>
            <person name="Omura Y."/>
            <person name="Abe K."/>
            <person name="Kamihara K."/>
            <person name="Katsuta N."/>
            <person name="Sato K."/>
            <person name="Tanikawa M."/>
            <person name="Yamazaki M."/>
            <person name="Ninomiya K."/>
            <person name="Ishibashi T."/>
            <person name="Yamashita H."/>
            <person name="Murakawa K."/>
            <person name="Fujimori K."/>
            <person name="Tanai H."/>
            <person name="Kimata M."/>
            <person name="Watanabe M."/>
            <person name="Hiraoka S."/>
            <person name="Chiba Y."/>
            <person name="Ishida S."/>
            <person name="Ono Y."/>
            <person name="Takiguchi S."/>
            <person name="Watanabe S."/>
            <person name="Yosida M."/>
            <person name="Hotuta T."/>
            <person name="Kusano J."/>
            <person name="Kanehori K."/>
            <person name="Takahashi-Fujii A."/>
            <person name="Hara H."/>
            <person name="Tanase T.-O."/>
            <person name="Nomura Y."/>
            <person name="Togiya S."/>
            <person name="Komai F."/>
            <person name="Hara R."/>
            <person name="Takeuchi K."/>
            <person name="Arita M."/>
            <person name="Imose N."/>
            <person name="Musashino K."/>
            <person name="Yuuki H."/>
            <person name="Oshima A."/>
            <person name="Sasaki N."/>
            <person name="Aotsuka S."/>
            <person name="Yoshikawa Y."/>
            <person name="Matsunawa H."/>
            <person name="Ichihara T."/>
            <person name="Shiohata N."/>
            <person name="Sano S."/>
            <person name="Moriya S."/>
            <person name="Momiyama H."/>
            <person name="Satoh N."/>
            <person name="Takami S."/>
            <person name="Terashima Y."/>
            <person name="Suzuki O."/>
            <person name="Nakagawa S."/>
            <person name="Senoh A."/>
            <person name="Mizoguchi H."/>
            <person name="Goto Y."/>
            <person name="Shimizu F."/>
            <person name="Wakebe H."/>
            <person name="Hishigaki H."/>
            <person name="Watanabe T."/>
            <person name="Sugiyama A."/>
            <person name="Takemoto M."/>
            <person name="Kawakami B."/>
            <person name="Yamazaki M."/>
            <person name="Watanabe K."/>
            <person name="Kumagai A."/>
            <person name="Itakura S."/>
            <person name="Fukuzumi Y."/>
            <person name="Fujimori Y."/>
            <person name="Komiyama M."/>
            <person name="Tashiro H."/>
            <person name="Tanigami A."/>
            <person name="Fujiwara T."/>
            <person name="Ono T."/>
            <person name="Yamada K."/>
            <person name="Fujii Y."/>
            <person name="Ozaki K."/>
            <person name="Hirao M."/>
            <person name="Ohmori Y."/>
            <person name="Kawabata A."/>
            <person name="Hikiji T."/>
            <person name="Kobatake N."/>
            <person name="Inagaki H."/>
            <person name="Ikema Y."/>
            <person name="Okamoto S."/>
            <person name="Okitani R."/>
            <person name="Kawakami T."/>
            <person name="Noguchi S."/>
            <person name="Itoh T."/>
            <person name="Shigeta K."/>
            <person name="Senba T."/>
            <person name="Matsumura K."/>
            <person name="Nakajima Y."/>
            <person name="Mizuno T."/>
            <person name="Morinaga M."/>
            <person name="Sasaki M."/>
            <person name="Togashi T."/>
            <person name="Oyama M."/>
            <person name="Hata H."/>
            <person name="Watanabe M."/>
            <person name="Komatsu T."/>
            <person name="Mizushima-Sugano J."/>
            <person name="Satoh T."/>
            <person name="Shirai Y."/>
            <person name="Takahashi Y."/>
            <person name="Nakagawa K."/>
            <person name="Okumura K."/>
            <person name="Nagase T."/>
            <person name="Nomura N."/>
            <person name="Kikuchi H."/>
            <person name="Masuho Y."/>
            <person name="Yamashita R."/>
            <person name="Nakai K."/>
            <person name="Yada T."/>
            <person name="Nakamura Y."/>
            <person name="Ohara O."/>
            <person name="Isogai T."/>
            <person name="Sugano S."/>
        </authorList>
    </citation>
    <scope>NUCLEOTIDE SEQUENCE [LARGE SCALE MRNA]</scope>
    <source>
        <tissue>Embryo</tissue>
    </source>
</reference>
<reference key="3">
    <citation type="submission" date="2007-02" db="EMBL/GenBank/DDBJ databases">
        <authorList>
            <consortium name="NHLBI resequencing and genotyping service (RS&amp;G)"/>
        </authorList>
    </citation>
    <scope>NUCLEOTIDE SEQUENCE [GENOMIC DNA]</scope>
</reference>
<reference key="4">
    <citation type="journal article" date="2004" name="Nature">
        <title>The DNA sequence and comparative analysis of human chromosome 10.</title>
        <authorList>
            <person name="Deloukas P."/>
            <person name="Earthrowl M.E."/>
            <person name="Grafham D.V."/>
            <person name="Rubenfield M."/>
            <person name="French L."/>
            <person name="Steward C.A."/>
            <person name="Sims S.K."/>
            <person name="Jones M.C."/>
            <person name="Searle S."/>
            <person name="Scott C."/>
            <person name="Howe K."/>
            <person name="Hunt S.E."/>
            <person name="Andrews T.D."/>
            <person name="Gilbert J.G.R."/>
            <person name="Swarbreck D."/>
            <person name="Ashurst J.L."/>
            <person name="Taylor A."/>
            <person name="Battles J."/>
            <person name="Bird C.P."/>
            <person name="Ainscough R."/>
            <person name="Almeida J.P."/>
            <person name="Ashwell R.I.S."/>
            <person name="Ambrose K.D."/>
            <person name="Babbage A.K."/>
            <person name="Bagguley C.L."/>
            <person name="Bailey J."/>
            <person name="Banerjee R."/>
            <person name="Bates K."/>
            <person name="Beasley H."/>
            <person name="Bray-Allen S."/>
            <person name="Brown A.J."/>
            <person name="Brown J.Y."/>
            <person name="Burford D.C."/>
            <person name="Burrill W."/>
            <person name="Burton J."/>
            <person name="Cahill P."/>
            <person name="Camire D."/>
            <person name="Carter N.P."/>
            <person name="Chapman J.C."/>
            <person name="Clark S.Y."/>
            <person name="Clarke G."/>
            <person name="Clee C.M."/>
            <person name="Clegg S."/>
            <person name="Corby N."/>
            <person name="Coulson A."/>
            <person name="Dhami P."/>
            <person name="Dutta I."/>
            <person name="Dunn M."/>
            <person name="Faulkner L."/>
            <person name="Frankish A."/>
            <person name="Frankland J.A."/>
            <person name="Garner P."/>
            <person name="Garnett J."/>
            <person name="Gribble S."/>
            <person name="Griffiths C."/>
            <person name="Grocock R."/>
            <person name="Gustafson E."/>
            <person name="Hammond S."/>
            <person name="Harley J.L."/>
            <person name="Hart E."/>
            <person name="Heath P.D."/>
            <person name="Ho T.P."/>
            <person name="Hopkins B."/>
            <person name="Horne J."/>
            <person name="Howden P.J."/>
            <person name="Huckle E."/>
            <person name="Hynds C."/>
            <person name="Johnson C."/>
            <person name="Johnson D."/>
            <person name="Kana A."/>
            <person name="Kay M."/>
            <person name="Kimberley A.M."/>
            <person name="Kershaw J.K."/>
            <person name="Kokkinaki M."/>
            <person name="Laird G.K."/>
            <person name="Lawlor S."/>
            <person name="Lee H.M."/>
            <person name="Leongamornlert D.A."/>
            <person name="Laird G."/>
            <person name="Lloyd C."/>
            <person name="Lloyd D.M."/>
            <person name="Loveland J."/>
            <person name="Lovell J."/>
            <person name="McLaren S."/>
            <person name="McLay K.E."/>
            <person name="McMurray A."/>
            <person name="Mashreghi-Mohammadi M."/>
            <person name="Matthews L."/>
            <person name="Milne S."/>
            <person name="Nickerson T."/>
            <person name="Nguyen M."/>
            <person name="Overton-Larty E."/>
            <person name="Palmer S.A."/>
            <person name="Pearce A.V."/>
            <person name="Peck A.I."/>
            <person name="Pelan S."/>
            <person name="Phillimore B."/>
            <person name="Porter K."/>
            <person name="Rice C.M."/>
            <person name="Rogosin A."/>
            <person name="Ross M.T."/>
            <person name="Sarafidou T."/>
            <person name="Sehra H.K."/>
            <person name="Shownkeen R."/>
            <person name="Skuce C.D."/>
            <person name="Smith M."/>
            <person name="Standring L."/>
            <person name="Sycamore N."/>
            <person name="Tester J."/>
            <person name="Thorpe A."/>
            <person name="Torcasso W."/>
            <person name="Tracey A."/>
            <person name="Tromans A."/>
            <person name="Tsolas J."/>
            <person name="Wall M."/>
            <person name="Walsh J."/>
            <person name="Wang H."/>
            <person name="Weinstock K."/>
            <person name="West A.P."/>
            <person name="Willey D.L."/>
            <person name="Whitehead S.L."/>
            <person name="Wilming L."/>
            <person name="Wray P.W."/>
            <person name="Young L."/>
            <person name="Chen Y."/>
            <person name="Lovering R.C."/>
            <person name="Moschonas N.K."/>
            <person name="Siebert R."/>
            <person name="Fechtel K."/>
            <person name="Bentley D."/>
            <person name="Durbin R.M."/>
            <person name="Hubbard T."/>
            <person name="Doucette-Stamm L."/>
            <person name="Beck S."/>
            <person name="Smith D.R."/>
            <person name="Rogers J."/>
        </authorList>
    </citation>
    <scope>NUCLEOTIDE SEQUENCE [LARGE SCALE GENOMIC DNA]</scope>
</reference>
<reference key="5">
    <citation type="journal article" date="2004" name="Genome Res.">
        <title>The status, quality, and expansion of the NIH full-length cDNA project: the Mammalian Gene Collection (MGC).</title>
        <authorList>
            <consortium name="The MGC Project Team"/>
        </authorList>
    </citation>
    <scope>NUCLEOTIDE SEQUENCE [LARGE SCALE MRNA]</scope>
    <source>
        <tissue>Brain</tissue>
    </source>
</reference>
<reference key="6">
    <citation type="journal article" date="2006" name="Cell">
        <title>Global, in vivo, and site-specific phosphorylation dynamics in signaling networks.</title>
        <authorList>
            <person name="Olsen J.V."/>
            <person name="Blagoev B."/>
            <person name="Gnad F."/>
            <person name="Macek B."/>
            <person name="Kumar C."/>
            <person name="Mortensen P."/>
            <person name="Mann M."/>
        </authorList>
    </citation>
    <scope>IDENTIFICATION BY MASS SPECTROMETRY [LARGE SCALE ANALYSIS]</scope>
    <source>
        <tissue>Cervix carcinoma</tissue>
    </source>
</reference>
<reference key="7">
    <citation type="journal article" date="2008" name="Proc. Natl. Acad. Sci. U.S.A.">
        <title>A quantitative atlas of mitotic phosphorylation.</title>
        <authorList>
            <person name="Dephoure N."/>
            <person name="Zhou C."/>
            <person name="Villen J."/>
            <person name="Beausoleil S.A."/>
            <person name="Bakalarski C.E."/>
            <person name="Elledge S.J."/>
            <person name="Gygi S.P."/>
        </authorList>
    </citation>
    <scope>PHOSPHORYLATION [LARGE SCALE ANALYSIS] AT SER-381 AND SER-430</scope>
    <scope>IDENTIFICATION BY MASS SPECTROMETRY [LARGE SCALE ANALYSIS]</scope>
    <source>
        <tissue>Cervix carcinoma</tissue>
    </source>
</reference>
<reference key="8">
    <citation type="journal article" date="2009" name="Anal. Chem.">
        <title>Lys-N and trypsin cover complementary parts of the phosphoproteome in a refined SCX-based approach.</title>
        <authorList>
            <person name="Gauci S."/>
            <person name="Helbig A.O."/>
            <person name="Slijper M."/>
            <person name="Krijgsveld J."/>
            <person name="Heck A.J."/>
            <person name="Mohammed S."/>
        </authorList>
    </citation>
    <scope>IDENTIFICATION BY MASS SPECTROMETRY [LARGE SCALE ANALYSIS]</scope>
</reference>
<reference key="9">
    <citation type="journal article" date="2009" name="Sci. Signal.">
        <title>Quantitative phosphoproteomic analysis of T cell receptor signaling reveals system-wide modulation of protein-protein interactions.</title>
        <authorList>
            <person name="Mayya V."/>
            <person name="Lundgren D.H."/>
            <person name="Hwang S.-I."/>
            <person name="Rezaul K."/>
            <person name="Wu L."/>
            <person name="Eng J.K."/>
            <person name="Rodionov V."/>
            <person name="Han D.K."/>
        </authorList>
    </citation>
    <scope>PHOSPHORYLATION [LARGE SCALE ANALYSIS] AT SER-430</scope>
    <scope>IDENTIFICATION BY MASS SPECTROMETRY [LARGE SCALE ANALYSIS]</scope>
    <source>
        <tissue>Leukemic T-cell</tissue>
    </source>
</reference>
<reference key="10">
    <citation type="journal article" date="2010" name="Sci. Signal.">
        <title>Quantitative phosphoproteomics reveals widespread full phosphorylation site occupancy during mitosis.</title>
        <authorList>
            <person name="Olsen J.V."/>
            <person name="Vermeulen M."/>
            <person name="Santamaria A."/>
            <person name="Kumar C."/>
            <person name="Miller M.L."/>
            <person name="Jensen L.J."/>
            <person name="Gnad F."/>
            <person name="Cox J."/>
            <person name="Jensen T.S."/>
            <person name="Nigg E.A."/>
            <person name="Brunak S."/>
            <person name="Mann M."/>
        </authorList>
    </citation>
    <scope>IDENTIFICATION BY MASS SPECTROMETRY [LARGE SCALE ANALYSIS]</scope>
    <source>
        <tissue>Cervix carcinoma</tissue>
    </source>
</reference>
<reference key="11">
    <citation type="journal article" date="2011" name="BMC Syst. Biol.">
        <title>Initial characterization of the human central proteome.</title>
        <authorList>
            <person name="Burkard T.R."/>
            <person name="Planyavsky M."/>
            <person name="Kaupe I."/>
            <person name="Breitwieser F.P."/>
            <person name="Buerckstuemmer T."/>
            <person name="Bennett K.L."/>
            <person name="Superti-Furga G."/>
            <person name="Colinge J."/>
        </authorList>
    </citation>
    <scope>IDENTIFICATION BY MASS SPECTROMETRY [LARGE SCALE ANALYSIS]</scope>
</reference>
<reference key="12">
    <citation type="journal article" date="2011" name="Sci. Signal.">
        <title>System-wide temporal characterization of the proteome and phosphoproteome of human embryonic stem cell differentiation.</title>
        <authorList>
            <person name="Rigbolt K.T."/>
            <person name="Prokhorova T.A."/>
            <person name="Akimov V."/>
            <person name="Henningsen J."/>
            <person name="Johansen P.T."/>
            <person name="Kratchmarova I."/>
            <person name="Kassem M."/>
            <person name="Mann M."/>
            <person name="Olsen J.V."/>
            <person name="Blagoev B."/>
        </authorList>
    </citation>
    <scope>PHOSPHORYLATION [LARGE SCALE ANALYSIS] AT SER-479; SER-480 AND SER-484</scope>
    <scope>IDENTIFICATION BY MASS SPECTROMETRY [LARGE SCALE ANALYSIS]</scope>
</reference>
<reference key="13">
    <citation type="journal article" date="2013" name="J. Proteome Res.">
        <title>Toward a comprehensive characterization of a human cancer cell phosphoproteome.</title>
        <authorList>
            <person name="Zhou H."/>
            <person name="Di Palma S."/>
            <person name="Preisinger C."/>
            <person name="Peng M."/>
            <person name="Polat A.N."/>
            <person name="Heck A.J."/>
            <person name="Mohammed S."/>
        </authorList>
    </citation>
    <scope>PHOSPHORYLATION [LARGE SCALE ANALYSIS] AT SER-430; SER-479; SER-480 AND SER-492</scope>
    <scope>IDENTIFICATION BY MASS SPECTROMETRY [LARGE SCALE ANALYSIS]</scope>
    <source>
        <tissue>Cervix carcinoma</tissue>
        <tissue>Erythroleukemia</tissue>
    </source>
</reference>
<reference key="14">
    <citation type="journal article" date="2014" name="J. Proteomics">
        <title>An enzyme assisted RP-RPLC approach for in-depth analysis of human liver phosphoproteome.</title>
        <authorList>
            <person name="Bian Y."/>
            <person name="Song C."/>
            <person name="Cheng K."/>
            <person name="Dong M."/>
            <person name="Wang F."/>
            <person name="Huang J."/>
            <person name="Sun D."/>
            <person name="Wang L."/>
            <person name="Ye M."/>
            <person name="Zou H."/>
        </authorList>
    </citation>
    <scope>PHOSPHORYLATION [LARGE SCALE ANALYSIS] AT SER-479 AND SER-480</scope>
    <scope>IDENTIFICATION BY MASS SPECTROMETRY [LARGE SCALE ANALYSIS]</scope>
    <source>
        <tissue>Liver</tissue>
    </source>
</reference>
<reference key="15">
    <citation type="submission" date="2005-11" db="PDB data bank">
        <title>Solution structure of RSGI RUH-037, a Myb DNA-binding domain in human.</title>
        <authorList>
            <consortium name="RIKEN structural genomics initiative (RSGI)"/>
        </authorList>
    </citation>
    <scope>STRUCTURE BY NMR OF 327-385 AND 484-543</scope>
</reference>
<gene>
    <name type="primary">DNAJC1</name>
    <name type="synonym">HTJ1</name>
</gene>
<accession>Q96KC8</accession>
<accession>B0YIZ8</accession>
<accession>Q5VX89</accession>
<accession>Q9H6B8</accession>
<dbReference type="EMBL" id="AY225122">
    <property type="protein sequence ID" value="AAP50497.1"/>
    <property type="molecule type" value="mRNA"/>
</dbReference>
<dbReference type="EMBL" id="AK026062">
    <property type="protein sequence ID" value="BAB15343.1"/>
    <property type="molecule type" value="mRNA"/>
</dbReference>
<dbReference type="EMBL" id="AK027263">
    <property type="protein sequence ID" value="BAB55004.1"/>
    <property type="molecule type" value="mRNA"/>
</dbReference>
<dbReference type="EMBL" id="EF444973">
    <property type="protein sequence ID" value="ACA05978.1"/>
    <property type="molecule type" value="Genomic_DNA"/>
</dbReference>
<dbReference type="EMBL" id="EF444973">
    <property type="protein sequence ID" value="ACA05979.1"/>
    <property type="molecule type" value="Genomic_DNA"/>
</dbReference>
<dbReference type="EMBL" id="AL445431">
    <property type="status" value="NOT_ANNOTATED_CDS"/>
    <property type="molecule type" value="Genomic_DNA"/>
</dbReference>
<dbReference type="EMBL" id="AL359697">
    <property type="status" value="NOT_ANNOTATED_CDS"/>
    <property type="molecule type" value="Genomic_DNA"/>
</dbReference>
<dbReference type="EMBL" id="BC110894">
    <property type="protein sequence ID" value="AAI10895.1"/>
    <property type="molecule type" value="mRNA"/>
</dbReference>
<dbReference type="CCDS" id="CCDS7136.1"/>
<dbReference type="RefSeq" id="NP_071760.2">
    <property type="nucleotide sequence ID" value="NM_022365.3"/>
</dbReference>
<dbReference type="PDB" id="2CQQ">
    <property type="method" value="NMR"/>
    <property type="chains" value="A=327-385"/>
</dbReference>
<dbReference type="PDB" id="2CQR">
    <property type="method" value="NMR"/>
    <property type="chains" value="A=484-543"/>
</dbReference>
<dbReference type="PDBsum" id="2CQQ"/>
<dbReference type="PDBsum" id="2CQR"/>
<dbReference type="SMR" id="Q96KC8"/>
<dbReference type="BioGRID" id="122105">
    <property type="interactions" value="376"/>
</dbReference>
<dbReference type="FunCoup" id="Q96KC8">
    <property type="interactions" value="2046"/>
</dbReference>
<dbReference type="IntAct" id="Q96KC8">
    <property type="interactions" value="56"/>
</dbReference>
<dbReference type="MINT" id="Q96KC8"/>
<dbReference type="STRING" id="9606.ENSP00000366179"/>
<dbReference type="GlyGen" id="Q96KC8">
    <property type="glycosylation" value="1 site"/>
</dbReference>
<dbReference type="iPTMnet" id="Q96KC8"/>
<dbReference type="MetOSite" id="Q96KC8"/>
<dbReference type="PhosphoSitePlus" id="Q96KC8"/>
<dbReference type="SwissPalm" id="Q96KC8"/>
<dbReference type="BioMuta" id="DNAJC1"/>
<dbReference type="DMDM" id="27805464"/>
<dbReference type="jPOST" id="Q96KC8"/>
<dbReference type="MassIVE" id="Q96KC8"/>
<dbReference type="PaxDb" id="9606-ENSP00000366179"/>
<dbReference type="PeptideAtlas" id="Q96KC8"/>
<dbReference type="ProteomicsDB" id="77059"/>
<dbReference type="Pumba" id="Q96KC8"/>
<dbReference type="Antibodypedia" id="2466">
    <property type="antibodies" value="88 antibodies from 23 providers"/>
</dbReference>
<dbReference type="DNASU" id="64215"/>
<dbReference type="Ensembl" id="ENST00000376980.8">
    <property type="protein sequence ID" value="ENSP00000366179.3"/>
    <property type="gene ID" value="ENSG00000136770.11"/>
</dbReference>
<dbReference type="GeneID" id="64215"/>
<dbReference type="KEGG" id="hsa:64215"/>
<dbReference type="MANE-Select" id="ENST00000376980.8">
    <property type="protein sequence ID" value="ENSP00000366179.3"/>
    <property type="RefSeq nucleotide sequence ID" value="NM_022365.4"/>
    <property type="RefSeq protein sequence ID" value="NP_071760.2"/>
</dbReference>
<dbReference type="UCSC" id="uc001irc.4">
    <property type="organism name" value="human"/>
</dbReference>
<dbReference type="AGR" id="HGNC:20090"/>
<dbReference type="CTD" id="64215"/>
<dbReference type="DisGeNET" id="64215"/>
<dbReference type="GeneCards" id="DNAJC1"/>
<dbReference type="HGNC" id="HGNC:20090">
    <property type="gene designation" value="DNAJC1"/>
</dbReference>
<dbReference type="HPA" id="ENSG00000136770">
    <property type="expression patterns" value="Low tissue specificity"/>
</dbReference>
<dbReference type="MIM" id="611207">
    <property type="type" value="gene"/>
</dbReference>
<dbReference type="neXtProt" id="NX_Q96KC8"/>
<dbReference type="OpenTargets" id="ENSG00000136770"/>
<dbReference type="PharmGKB" id="PA128394706"/>
<dbReference type="VEuPathDB" id="HostDB:ENSG00000136770"/>
<dbReference type="eggNOG" id="KOG0724">
    <property type="taxonomic scope" value="Eukaryota"/>
</dbReference>
<dbReference type="GeneTree" id="ENSGT00940000156678"/>
<dbReference type="HOGENOM" id="CLU_036945_2_0_1"/>
<dbReference type="InParanoid" id="Q96KC8"/>
<dbReference type="OMA" id="AAYWERK"/>
<dbReference type="OrthoDB" id="1420887at2759"/>
<dbReference type="PAN-GO" id="Q96KC8">
    <property type="GO annotations" value="1 GO annotation based on evolutionary models"/>
</dbReference>
<dbReference type="PhylomeDB" id="Q96KC8"/>
<dbReference type="TreeFam" id="TF105161"/>
<dbReference type="PathwayCommons" id="Q96KC8"/>
<dbReference type="SignaLink" id="Q96KC8"/>
<dbReference type="BioGRID-ORCS" id="64215">
    <property type="hits" value="5 hits in 1177 CRISPR screens"/>
</dbReference>
<dbReference type="ChiTaRS" id="DNAJC1">
    <property type="organism name" value="human"/>
</dbReference>
<dbReference type="EvolutionaryTrace" id="Q96KC8"/>
<dbReference type="GeneWiki" id="DNAJC1"/>
<dbReference type="GenomeRNAi" id="64215"/>
<dbReference type="Pharos" id="Q96KC8">
    <property type="development level" value="Tbio"/>
</dbReference>
<dbReference type="PRO" id="PR:Q96KC8"/>
<dbReference type="Proteomes" id="UP000005640">
    <property type="component" value="Chromosome 10"/>
</dbReference>
<dbReference type="RNAct" id="Q96KC8">
    <property type="molecule type" value="protein"/>
</dbReference>
<dbReference type="Bgee" id="ENSG00000136770">
    <property type="expression patterns" value="Expressed in secondary oocyte and 206 other cell types or tissues"/>
</dbReference>
<dbReference type="ExpressionAtlas" id="Q96KC8">
    <property type="expression patterns" value="baseline and differential"/>
</dbReference>
<dbReference type="GO" id="GO:0012505">
    <property type="term" value="C:endomembrane system"/>
    <property type="evidence" value="ECO:0000318"/>
    <property type="project" value="GO_Central"/>
</dbReference>
<dbReference type="GO" id="GO:0005783">
    <property type="term" value="C:endoplasmic reticulum"/>
    <property type="evidence" value="ECO:0000250"/>
    <property type="project" value="UniProtKB"/>
</dbReference>
<dbReference type="GO" id="GO:0005789">
    <property type="term" value="C:endoplasmic reticulum membrane"/>
    <property type="evidence" value="ECO:0007669"/>
    <property type="project" value="UniProtKB-SubCell"/>
</dbReference>
<dbReference type="GO" id="GO:0016020">
    <property type="term" value="C:membrane"/>
    <property type="evidence" value="ECO:0007005"/>
    <property type="project" value="UniProtKB"/>
</dbReference>
<dbReference type="GO" id="GO:0031965">
    <property type="term" value="C:nuclear membrane"/>
    <property type="evidence" value="ECO:0007669"/>
    <property type="project" value="UniProtKB-SubCell"/>
</dbReference>
<dbReference type="GO" id="GO:0005886">
    <property type="term" value="C:plasma membrane"/>
    <property type="evidence" value="ECO:0007669"/>
    <property type="project" value="Ensembl"/>
</dbReference>
<dbReference type="GO" id="GO:0001671">
    <property type="term" value="F:ATPase activator activity"/>
    <property type="evidence" value="ECO:0000304"/>
    <property type="project" value="UniProtKB"/>
</dbReference>
<dbReference type="GO" id="GO:0003677">
    <property type="term" value="F:DNA binding"/>
    <property type="evidence" value="ECO:0007669"/>
    <property type="project" value="UniProtKB-KW"/>
</dbReference>
<dbReference type="GO" id="GO:0051087">
    <property type="term" value="F:protein-folding chaperone binding"/>
    <property type="evidence" value="ECO:0007669"/>
    <property type="project" value="Ensembl"/>
</dbReference>
<dbReference type="GO" id="GO:0045861">
    <property type="term" value="P:negative regulation of proteolysis"/>
    <property type="evidence" value="ECO:0000304"/>
    <property type="project" value="UniProtKB"/>
</dbReference>
<dbReference type="GO" id="GO:0006457">
    <property type="term" value="P:protein folding"/>
    <property type="evidence" value="ECO:0007669"/>
    <property type="project" value="Ensembl"/>
</dbReference>
<dbReference type="GO" id="GO:0050708">
    <property type="term" value="P:regulation of protein secretion"/>
    <property type="evidence" value="ECO:0000314"/>
    <property type="project" value="UniProtKB"/>
</dbReference>
<dbReference type="GO" id="GO:0006417">
    <property type="term" value="P:regulation of translation"/>
    <property type="evidence" value="ECO:0007669"/>
    <property type="project" value="Ensembl"/>
</dbReference>
<dbReference type="CDD" id="cd06257">
    <property type="entry name" value="DnaJ"/>
    <property type="match status" value="1"/>
</dbReference>
<dbReference type="CDD" id="cd00167">
    <property type="entry name" value="SANT"/>
    <property type="match status" value="2"/>
</dbReference>
<dbReference type="FunFam" id="1.10.10.60:FF:000255">
    <property type="entry name" value="DnaJ (Hsp40) homolog, subfamily C, member 1"/>
    <property type="match status" value="1"/>
</dbReference>
<dbReference type="FunFam" id="1.10.287.110:FF:000044">
    <property type="entry name" value="DnaJ (Hsp40) homolog, subfamily C, member 1"/>
    <property type="match status" value="1"/>
</dbReference>
<dbReference type="FunFam" id="1.10.10.60:FF:000180">
    <property type="entry name" value="DnaJ (Hsp40) homolog, subfamily C, member 2"/>
    <property type="match status" value="1"/>
</dbReference>
<dbReference type="Gene3D" id="1.10.287.110">
    <property type="entry name" value="DnaJ domain"/>
    <property type="match status" value="1"/>
</dbReference>
<dbReference type="Gene3D" id="1.10.10.60">
    <property type="entry name" value="Homeodomain-like"/>
    <property type="match status" value="2"/>
</dbReference>
<dbReference type="InterPro" id="IPR001623">
    <property type="entry name" value="DnaJ_domain"/>
</dbReference>
<dbReference type="InterPro" id="IPR018253">
    <property type="entry name" value="DnaJ_domain_CS"/>
</dbReference>
<dbReference type="InterPro" id="IPR052606">
    <property type="entry name" value="DnaJ_domain_protein"/>
</dbReference>
<dbReference type="InterPro" id="IPR009057">
    <property type="entry name" value="Homeodomain-like_sf"/>
</dbReference>
<dbReference type="InterPro" id="IPR036869">
    <property type="entry name" value="J_dom_sf"/>
</dbReference>
<dbReference type="InterPro" id="IPR001005">
    <property type="entry name" value="SANT/Myb"/>
</dbReference>
<dbReference type="InterPro" id="IPR017884">
    <property type="entry name" value="SANT_dom"/>
</dbReference>
<dbReference type="PANTHER" id="PTHR44653">
    <property type="entry name" value="DNAJ HOMOLOG SUBFAMILY C MEMBER 1"/>
    <property type="match status" value="1"/>
</dbReference>
<dbReference type="PANTHER" id="PTHR44653:SF2">
    <property type="entry name" value="DNAJ HOMOLOG SUBFAMILY C MEMBER 1"/>
    <property type="match status" value="1"/>
</dbReference>
<dbReference type="Pfam" id="PF00226">
    <property type="entry name" value="DnaJ"/>
    <property type="match status" value="1"/>
</dbReference>
<dbReference type="Pfam" id="PF00249">
    <property type="entry name" value="Myb_DNA-binding"/>
    <property type="match status" value="1"/>
</dbReference>
<dbReference type="Pfam" id="PF23082">
    <property type="entry name" value="Myb_DNA-binding_2"/>
    <property type="match status" value="1"/>
</dbReference>
<dbReference type="PRINTS" id="PR00625">
    <property type="entry name" value="JDOMAIN"/>
</dbReference>
<dbReference type="SMART" id="SM00271">
    <property type="entry name" value="DnaJ"/>
    <property type="match status" value="1"/>
</dbReference>
<dbReference type="SMART" id="SM00717">
    <property type="entry name" value="SANT"/>
    <property type="match status" value="2"/>
</dbReference>
<dbReference type="SUPFAM" id="SSF46565">
    <property type="entry name" value="Chaperone J-domain"/>
    <property type="match status" value="1"/>
</dbReference>
<dbReference type="SUPFAM" id="SSF46689">
    <property type="entry name" value="Homeodomain-like"/>
    <property type="match status" value="2"/>
</dbReference>
<dbReference type="PROSITE" id="PS00636">
    <property type="entry name" value="DNAJ_1"/>
    <property type="match status" value="1"/>
</dbReference>
<dbReference type="PROSITE" id="PS50076">
    <property type="entry name" value="DNAJ_2"/>
    <property type="match status" value="1"/>
</dbReference>
<dbReference type="PROSITE" id="PS51293">
    <property type="entry name" value="SANT"/>
    <property type="match status" value="2"/>
</dbReference>
<keyword id="KW-0002">3D-structure</keyword>
<keyword id="KW-0143">Chaperone</keyword>
<keyword id="KW-0238">DNA-binding</keyword>
<keyword id="KW-0256">Endoplasmic reticulum</keyword>
<keyword id="KW-0472">Membrane</keyword>
<keyword id="KW-0492">Microsome</keyword>
<keyword id="KW-0539">Nucleus</keyword>
<keyword id="KW-0597">Phosphoprotein</keyword>
<keyword id="KW-1267">Proteomics identification</keyword>
<keyword id="KW-1185">Reference proteome</keyword>
<keyword id="KW-0677">Repeat</keyword>
<keyword id="KW-0732">Signal</keyword>
<keyword id="KW-0812">Transmembrane</keyword>
<keyword id="KW-1133">Transmembrane helix</keyword>
<sequence>MTAPCSQPAQLPGRRQLGLVPFPPPPPRTPLLWLLLLLLAAVAPARGWESGDLELFDLVEEVQLNFYQFLGVQQDASSADIRKAYRKLSLTLHPDKNKDENAETQFRQLVAIYEVLKDDERRQRYDDILINGLPDWRQPVFYYRRVRKMSNAELALLLFIILTVGHYAVVWSIYLEKQLDELLSRKKREKKKKTGSKSVDVSKLGASEKNERLLMKPQWHDLLPCKLGIWFCLTLKALPHLIQDAGQFYAKYKETRLKEKEDALTRTELETLQKQKKVKKPKPEFPVYTPLETTYIQSYDHGTSIEEIEEQMDDWLENRNRTQKKQAPEWTEEDLSQLTRSMVKFPGGTPGRWEKIAHELGRSVTDVTTKAKQLKDSVTCSPGMVRLSELKSTVQNSRPIKTATTLPDDMITQREDAEGVAAEEEQEGDSGEQETGATDARPRRRKPARLLEATAKPEPEEKSRAKRQKDFDIAEQNESSDEESLRKERARSAEEPWTQNQQKLLELALQQYPRGSSDRWDKIARCVPSKSKEDCIARYKLLVELVQKKKQAKS</sequence>
<evidence type="ECO:0000250" key="1"/>
<evidence type="ECO:0000255" key="2"/>
<evidence type="ECO:0000255" key="3">
    <source>
        <dbReference type="PROSITE-ProRule" id="PRU00286"/>
    </source>
</evidence>
<evidence type="ECO:0000255" key="4">
    <source>
        <dbReference type="PROSITE-ProRule" id="PRU00624"/>
    </source>
</evidence>
<evidence type="ECO:0000256" key="5">
    <source>
        <dbReference type="SAM" id="MobiDB-lite"/>
    </source>
</evidence>
<evidence type="ECO:0000269" key="6">
    <source>
    </source>
</evidence>
<evidence type="ECO:0007744" key="7">
    <source>
    </source>
</evidence>
<evidence type="ECO:0007744" key="8">
    <source>
    </source>
</evidence>
<evidence type="ECO:0007744" key="9">
    <source>
    </source>
</evidence>
<evidence type="ECO:0007744" key="10">
    <source>
    </source>
</evidence>
<evidence type="ECO:0007744" key="11">
    <source>
    </source>
</evidence>
<evidence type="ECO:0007829" key="12">
    <source>
        <dbReference type="PDB" id="2CQQ"/>
    </source>
</evidence>
<evidence type="ECO:0007829" key="13">
    <source>
        <dbReference type="PDB" id="2CQR"/>
    </source>
</evidence>
<proteinExistence type="evidence at protein level"/>
<protein>
    <recommendedName>
        <fullName>DnaJ homolog subfamily C member 1</fullName>
    </recommendedName>
    <alternativeName>
        <fullName>DnaJ protein homolog MTJ1</fullName>
    </alternativeName>
</protein>